<comment type="function">
    <text evidence="1">Binds directly to 23S rRNA. The L1 stalk is quite mobile in the ribosome, and is involved in E site tRNA release.</text>
</comment>
<comment type="function">
    <text evidence="1">Protein L1 is also a translational repressor protein, it controls the translation of the L11 operon by binding to its mRNA.</text>
</comment>
<comment type="subunit">
    <text evidence="1">Part of the 50S ribosomal subunit.</text>
</comment>
<comment type="similarity">
    <text evidence="1">Belongs to the universal ribosomal protein uL1 family.</text>
</comment>
<keyword id="KW-1185">Reference proteome</keyword>
<keyword id="KW-0678">Repressor</keyword>
<keyword id="KW-0687">Ribonucleoprotein</keyword>
<keyword id="KW-0689">Ribosomal protein</keyword>
<keyword id="KW-0694">RNA-binding</keyword>
<keyword id="KW-0699">rRNA-binding</keyword>
<keyword id="KW-0810">Translation regulation</keyword>
<keyword id="KW-0820">tRNA-binding</keyword>
<feature type="chain" id="PRO_0000308003" description="Large ribosomal subunit protein uL1">
    <location>
        <begin position="1"/>
        <end position="230"/>
    </location>
</feature>
<reference key="1">
    <citation type="journal article" date="2009" name="J. Bacteriol.">
        <title>Complete genome sequence of Erythrobacter litoralis HTCC2594.</title>
        <authorList>
            <person name="Oh H.M."/>
            <person name="Giovannoni S.J."/>
            <person name="Ferriera S."/>
            <person name="Johnson J."/>
            <person name="Cho J.C."/>
        </authorList>
    </citation>
    <scope>NUCLEOTIDE SEQUENCE [LARGE SCALE GENOMIC DNA]</scope>
    <source>
        <strain>HTCC2594</strain>
    </source>
</reference>
<sequence>MAKQTKKQQEVAKLDPEKLYTVDEAIAVLREHKAKFDETVEVAMNLGVDPRHADQMVRGMVSLPSGTGKTVKVAVFAKGDNAEKATAAGADKVGAEDLMEDMQNGNLDYDRVIATPDMMGVVGRLGKVLGPKGLMPNPKLGTVTPNVEQAVKDAKGGQVEFRVEKMGIIHSGIGKMSFKDEDLKANFKSFTDAIVKAKPSGAKGKYVKKVSLTSSMGPGLKIDLAEVEGA</sequence>
<gene>
    <name evidence="1" type="primary">rplA</name>
    <name type="ordered locus">ELI_00070</name>
</gene>
<accession>Q2NDY5</accession>
<organism>
    <name type="scientific">Erythrobacter litoralis (strain HTCC2594)</name>
    <dbReference type="NCBI Taxonomy" id="314225"/>
    <lineage>
        <taxon>Bacteria</taxon>
        <taxon>Pseudomonadati</taxon>
        <taxon>Pseudomonadota</taxon>
        <taxon>Alphaproteobacteria</taxon>
        <taxon>Sphingomonadales</taxon>
        <taxon>Erythrobacteraceae</taxon>
        <taxon>Erythrobacter/Porphyrobacter group</taxon>
        <taxon>Erythrobacter</taxon>
    </lineage>
</organism>
<evidence type="ECO:0000255" key="1">
    <source>
        <dbReference type="HAMAP-Rule" id="MF_01318"/>
    </source>
</evidence>
<evidence type="ECO:0000305" key="2"/>
<dbReference type="EMBL" id="CP000157">
    <property type="protein sequence ID" value="ABC62106.1"/>
    <property type="molecule type" value="Genomic_DNA"/>
</dbReference>
<dbReference type="RefSeq" id="WP_011412984.1">
    <property type="nucleotide sequence ID" value="NC_007722.1"/>
</dbReference>
<dbReference type="SMR" id="Q2NDY5"/>
<dbReference type="STRING" id="314225.ELI_00070"/>
<dbReference type="KEGG" id="eli:ELI_00070"/>
<dbReference type="eggNOG" id="COG0081">
    <property type="taxonomic scope" value="Bacteria"/>
</dbReference>
<dbReference type="HOGENOM" id="CLU_062853_0_0_5"/>
<dbReference type="OrthoDB" id="9803740at2"/>
<dbReference type="Proteomes" id="UP000008808">
    <property type="component" value="Chromosome"/>
</dbReference>
<dbReference type="GO" id="GO:0022625">
    <property type="term" value="C:cytosolic large ribosomal subunit"/>
    <property type="evidence" value="ECO:0007669"/>
    <property type="project" value="TreeGrafter"/>
</dbReference>
<dbReference type="GO" id="GO:0019843">
    <property type="term" value="F:rRNA binding"/>
    <property type="evidence" value="ECO:0007669"/>
    <property type="project" value="UniProtKB-UniRule"/>
</dbReference>
<dbReference type="GO" id="GO:0003735">
    <property type="term" value="F:structural constituent of ribosome"/>
    <property type="evidence" value="ECO:0007669"/>
    <property type="project" value="InterPro"/>
</dbReference>
<dbReference type="GO" id="GO:0000049">
    <property type="term" value="F:tRNA binding"/>
    <property type="evidence" value="ECO:0007669"/>
    <property type="project" value="UniProtKB-KW"/>
</dbReference>
<dbReference type="GO" id="GO:0006417">
    <property type="term" value="P:regulation of translation"/>
    <property type="evidence" value="ECO:0007669"/>
    <property type="project" value="UniProtKB-KW"/>
</dbReference>
<dbReference type="GO" id="GO:0006412">
    <property type="term" value="P:translation"/>
    <property type="evidence" value="ECO:0007669"/>
    <property type="project" value="UniProtKB-UniRule"/>
</dbReference>
<dbReference type="CDD" id="cd00403">
    <property type="entry name" value="Ribosomal_L1"/>
    <property type="match status" value="1"/>
</dbReference>
<dbReference type="FunFam" id="3.40.50.790:FF:000001">
    <property type="entry name" value="50S ribosomal protein L1"/>
    <property type="match status" value="1"/>
</dbReference>
<dbReference type="Gene3D" id="3.30.190.20">
    <property type="match status" value="1"/>
</dbReference>
<dbReference type="Gene3D" id="3.40.50.790">
    <property type="match status" value="1"/>
</dbReference>
<dbReference type="HAMAP" id="MF_01318_B">
    <property type="entry name" value="Ribosomal_uL1_B"/>
    <property type="match status" value="1"/>
</dbReference>
<dbReference type="InterPro" id="IPR005878">
    <property type="entry name" value="Ribosom_uL1_bac-type"/>
</dbReference>
<dbReference type="InterPro" id="IPR002143">
    <property type="entry name" value="Ribosomal_uL1"/>
</dbReference>
<dbReference type="InterPro" id="IPR023674">
    <property type="entry name" value="Ribosomal_uL1-like"/>
</dbReference>
<dbReference type="InterPro" id="IPR028364">
    <property type="entry name" value="Ribosomal_uL1/biogenesis"/>
</dbReference>
<dbReference type="InterPro" id="IPR016095">
    <property type="entry name" value="Ribosomal_uL1_3-a/b-sand"/>
</dbReference>
<dbReference type="InterPro" id="IPR023673">
    <property type="entry name" value="Ribosomal_uL1_CS"/>
</dbReference>
<dbReference type="NCBIfam" id="TIGR01169">
    <property type="entry name" value="rplA_bact"/>
    <property type="match status" value="1"/>
</dbReference>
<dbReference type="PANTHER" id="PTHR36427">
    <property type="entry name" value="54S RIBOSOMAL PROTEIN L1, MITOCHONDRIAL"/>
    <property type="match status" value="1"/>
</dbReference>
<dbReference type="PANTHER" id="PTHR36427:SF3">
    <property type="entry name" value="LARGE RIBOSOMAL SUBUNIT PROTEIN UL1M"/>
    <property type="match status" value="1"/>
</dbReference>
<dbReference type="Pfam" id="PF00687">
    <property type="entry name" value="Ribosomal_L1"/>
    <property type="match status" value="1"/>
</dbReference>
<dbReference type="PIRSF" id="PIRSF002155">
    <property type="entry name" value="Ribosomal_L1"/>
    <property type="match status" value="1"/>
</dbReference>
<dbReference type="SUPFAM" id="SSF56808">
    <property type="entry name" value="Ribosomal protein L1"/>
    <property type="match status" value="1"/>
</dbReference>
<dbReference type="PROSITE" id="PS01199">
    <property type="entry name" value="RIBOSOMAL_L1"/>
    <property type="match status" value="1"/>
</dbReference>
<protein>
    <recommendedName>
        <fullName evidence="1">Large ribosomal subunit protein uL1</fullName>
    </recommendedName>
    <alternativeName>
        <fullName evidence="2">50S ribosomal protein L1</fullName>
    </alternativeName>
</protein>
<proteinExistence type="inferred from homology"/>
<name>RL1_ERYLH</name>